<reference key="1">
    <citation type="journal article" date="2008" name="Nature">
        <title>The draft genome of the transgenic tropical fruit tree papaya (Carica papaya Linnaeus).</title>
        <authorList>
            <person name="Ming R."/>
            <person name="Hou S."/>
            <person name="Feng Y."/>
            <person name="Yu Q."/>
            <person name="Dionne-Laporte A."/>
            <person name="Saw J.H."/>
            <person name="Senin P."/>
            <person name="Wang W."/>
            <person name="Ly B.V."/>
            <person name="Lewis K.L."/>
            <person name="Salzberg S.L."/>
            <person name="Feng L."/>
            <person name="Jones M.R."/>
            <person name="Skelton R.L."/>
            <person name="Murray J.E."/>
            <person name="Chen C."/>
            <person name="Qian W."/>
            <person name="Shen J."/>
            <person name="Du P."/>
            <person name="Eustice M."/>
            <person name="Tong E."/>
            <person name="Tang H."/>
            <person name="Lyons E."/>
            <person name="Paull R.E."/>
            <person name="Michael T.P."/>
            <person name="Wall K."/>
            <person name="Rice D.W."/>
            <person name="Albert H."/>
            <person name="Wang M.L."/>
            <person name="Zhu Y.J."/>
            <person name="Schatz M."/>
            <person name="Nagarajan N."/>
            <person name="Acob R.A."/>
            <person name="Guan P."/>
            <person name="Blas A."/>
            <person name="Wai C.M."/>
            <person name="Ackerman C.M."/>
            <person name="Ren Y."/>
            <person name="Liu C."/>
            <person name="Wang J."/>
            <person name="Wang J."/>
            <person name="Na J.K."/>
            <person name="Shakirov E.V."/>
            <person name="Haas B."/>
            <person name="Thimmapuram J."/>
            <person name="Nelson D."/>
            <person name="Wang X."/>
            <person name="Bowers J.E."/>
            <person name="Gschwend A.R."/>
            <person name="Delcher A.L."/>
            <person name="Singh R."/>
            <person name="Suzuki J.Y."/>
            <person name="Tripathi S."/>
            <person name="Neupane K."/>
            <person name="Wei H."/>
            <person name="Irikura B."/>
            <person name="Paidi M."/>
            <person name="Jiang N."/>
            <person name="Zhang W."/>
            <person name="Presting G."/>
            <person name="Windsor A."/>
            <person name="Navajas-Perez R."/>
            <person name="Torres M.J."/>
            <person name="Feltus F.A."/>
            <person name="Porter B."/>
            <person name="Li Y."/>
            <person name="Burroughs A.M."/>
            <person name="Luo M.C."/>
            <person name="Liu L."/>
            <person name="Christopher D.A."/>
            <person name="Mount S.M."/>
            <person name="Moore P.H."/>
            <person name="Sugimura T."/>
            <person name="Jiang J."/>
            <person name="Schuler M.A."/>
            <person name="Friedman V."/>
            <person name="Mitchell-Olds T."/>
            <person name="Shippen D.E."/>
            <person name="dePamphilis C.W."/>
            <person name="Palmer J.D."/>
            <person name="Freeling M."/>
            <person name="Paterson A.H."/>
            <person name="Gonsalves D."/>
            <person name="Wang L."/>
            <person name="Alam M."/>
        </authorList>
    </citation>
    <scope>NUCLEOTIDE SEQUENCE [LARGE SCALE GENOMIC DNA]</scope>
    <source>
        <strain>cv. SunUp</strain>
    </source>
</reference>
<gene>
    <name evidence="1" type="primary">atpH</name>
</gene>
<proteinExistence type="inferred from homology"/>
<organism>
    <name type="scientific">Carica papaya</name>
    <name type="common">Papaya</name>
    <dbReference type="NCBI Taxonomy" id="3649"/>
    <lineage>
        <taxon>Eukaryota</taxon>
        <taxon>Viridiplantae</taxon>
        <taxon>Streptophyta</taxon>
        <taxon>Embryophyta</taxon>
        <taxon>Tracheophyta</taxon>
        <taxon>Spermatophyta</taxon>
        <taxon>Magnoliopsida</taxon>
        <taxon>eudicotyledons</taxon>
        <taxon>Gunneridae</taxon>
        <taxon>Pentapetalae</taxon>
        <taxon>rosids</taxon>
        <taxon>malvids</taxon>
        <taxon>Brassicales</taxon>
        <taxon>Caricaceae</taxon>
        <taxon>Carica</taxon>
    </lineage>
</organism>
<feature type="chain" id="PRO_0000362894" description="ATP synthase subunit c, chloroplastic">
    <location>
        <begin position="1"/>
        <end position="81"/>
    </location>
</feature>
<feature type="transmembrane region" description="Helical" evidence="1">
    <location>
        <begin position="3"/>
        <end position="23"/>
    </location>
</feature>
<feature type="transmembrane region" description="Helical" evidence="1">
    <location>
        <begin position="57"/>
        <end position="77"/>
    </location>
</feature>
<feature type="site" description="Reversibly protonated during proton transport" evidence="1">
    <location>
        <position position="61"/>
    </location>
</feature>
<comment type="function">
    <text evidence="1">F(1)F(0) ATP synthase produces ATP from ADP in the presence of a proton or sodium gradient. F-type ATPases consist of two structural domains, F(1) containing the extramembraneous catalytic core and F(0) containing the membrane proton channel, linked together by a central stalk and a peripheral stalk. During catalysis, ATP synthesis in the catalytic domain of F(1) is coupled via a rotary mechanism of the central stalk subunits to proton translocation.</text>
</comment>
<comment type="function">
    <text evidence="1">Key component of the F(0) channel; it plays a direct role in translocation across the membrane. A homomeric c-ring of between 10-14 subunits forms the central stalk rotor element with the F(1) delta and epsilon subunits.</text>
</comment>
<comment type="subunit">
    <text evidence="1">F-type ATPases have 2 components, F(1) - the catalytic core - and F(0) - the membrane proton channel. F(1) has five subunits: alpha(3), beta(3), gamma(1), delta(1), epsilon(1). F(0) has four main subunits: a(1), b(1), b'(1) and c(10-14). The alpha and beta chains form an alternating ring which encloses part of the gamma chain. F(1) is attached to F(0) by a central stalk formed by the gamma and epsilon chains, while a peripheral stalk is formed by the delta, b and b' chains.</text>
</comment>
<comment type="subcellular location">
    <subcellularLocation>
        <location evidence="1">Plastid</location>
        <location evidence="1">Chloroplast thylakoid membrane</location>
        <topology evidence="1">Multi-pass membrane protein</topology>
    </subcellularLocation>
</comment>
<comment type="miscellaneous">
    <text>In plastids the F-type ATPase is also known as CF(1)CF(0).</text>
</comment>
<comment type="similarity">
    <text evidence="1">Belongs to the ATPase C chain family.</text>
</comment>
<protein>
    <recommendedName>
        <fullName evidence="1">ATP synthase subunit c, chloroplastic</fullName>
    </recommendedName>
    <alternativeName>
        <fullName evidence="1">ATP synthase F(0) sector subunit c</fullName>
    </alternativeName>
    <alternativeName>
        <fullName evidence="1">ATPase subunit III</fullName>
    </alternativeName>
    <alternativeName>
        <fullName evidence="1">F-type ATPase subunit c</fullName>
        <shortName evidence="1">F-ATPase subunit c</shortName>
    </alternativeName>
    <alternativeName>
        <fullName evidence="1">Lipid-binding protein</fullName>
    </alternativeName>
</protein>
<geneLocation type="chloroplast"/>
<evidence type="ECO:0000255" key="1">
    <source>
        <dbReference type="HAMAP-Rule" id="MF_01396"/>
    </source>
</evidence>
<keyword id="KW-0066">ATP synthesis</keyword>
<keyword id="KW-0138">CF(0)</keyword>
<keyword id="KW-0150">Chloroplast</keyword>
<keyword id="KW-0375">Hydrogen ion transport</keyword>
<keyword id="KW-0406">Ion transport</keyword>
<keyword id="KW-0446">Lipid-binding</keyword>
<keyword id="KW-0472">Membrane</keyword>
<keyword id="KW-0934">Plastid</keyword>
<keyword id="KW-0793">Thylakoid</keyword>
<keyword id="KW-0812">Transmembrane</keyword>
<keyword id="KW-1133">Transmembrane helix</keyword>
<keyword id="KW-0813">Transport</keyword>
<accession>B1A922</accession>
<dbReference type="EMBL" id="EU431223">
    <property type="protein sequence ID" value="ABY86769.1"/>
    <property type="molecule type" value="Genomic_DNA"/>
</dbReference>
<dbReference type="RefSeq" id="YP_001671670.1">
    <property type="nucleotide sequence ID" value="NC_010323.1"/>
</dbReference>
<dbReference type="SMR" id="B1A922"/>
<dbReference type="GeneID" id="5878433"/>
<dbReference type="KEGG" id="cpap:5878433"/>
<dbReference type="OrthoDB" id="438052at2759"/>
<dbReference type="GO" id="GO:0009535">
    <property type="term" value="C:chloroplast thylakoid membrane"/>
    <property type="evidence" value="ECO:0007669"/>
    <property type="project" value="UniProtKB-SubCell"/>
</dbReference>
<dbReference type="GO" id="GO:0045259">
    <property type="term" value="C:proton-transporting ATP synthase complex"/>
    <property type="evidence" value="ECO:0007669"/>
    <property type="project" value="UniProtKB-KW"/>
</dbReference>
<dbReference type="GO" id="GO:0033177">
    <property type="term" value="C:proton-transporting two-sector ATPase complex, proton-transporting domain"/>
    <property type="evidence" value="ECO:0007669"/>
    <property type="project" value="InterPro"/>
</dbReference>
<dbReference type="GO" id="GO:0008289">
    <property type="term" value="F:lipid binding"/>
    <property type="evidence" value="ECO:0007669"/>
    <property type="project" value="UniProtKB-KW"/>
</dbReference>
<dbReference type="GO" id="GO:0046933">
    <property type="term" value="F:proton-transporting ATP synthase activity, rotational mechanism"/>
    <property type="evidence" value="ECO:0007669"/>
    <property type="project" value="UniProtKB-UniRule"/>
</dbReference>
<dbReference type="CDD" id="cd18183">
    <property type="entry name" value="ATP-synt_Fo_c_ATPH"/>
    <property type="match status" value="1"/>
</dbReference>
<dbReference type="FunFam" id="1.20.20.10:FF:000001">
    <property type="entry name" value="ATP synthase subunit c, chloroplastic"/>
    <property type="match status" value="1"/>
</dbReference>
<dbReference type="Gene3D" id="1.20.20.10">
    <property type="entry name" value="F1F0 ATP synthase subunit C"/>
    <property type="match status" value="1"/>
</dbReference>
<dbReference type="HAMAP" id="MF_01396">
    <property type="entry name" value="ATP_synth_c_bact"/>
    <property type="match status" value="1"/>
</dbReference>
<dbReference type="InterPro" id="IPR005953">
    <property type="entry name" value="ATP_synth_csu_bac/chlpt"/>
</dbReference>
<dbReference type="InterPro" id="IPR000454">
    <property type="entry name" value="ATP_synth_F0_csu"/>
</dbReference>
<dbReference type="InterPro" id="IPR020537">
    <property type="entry name" value="ATP_synth_F0_csu_DDCD_BS"/>
</dbReference>
<dbReference type="InterPro" id="IPR038662">
    <property type="entry name" value="ATP_synth_F0_csu_sf"/>
</dbReference>
<dbReference type="InterPro" id="IPR002379">
    <property type="entry name" value="ATPase_proteolipid_c-like_dom"/>
</dbReference>
<dbReference type="InterPro" id="IPR035921">
    <property type="entry name" value="F/V-ATP_Csub_sf"/>
</dbReference>
<dbReference type="NCBIfam" id="TIGR01260">
    <property type="entry name" value="ATP_synt_c"/>
    <property type="match status" value="1"/>
</dbReference>
<dbReference type="NCBIfam" id="NF005608">
    <property type="entry name" value="PRK07354.1"/>
    <property type="match status" value="1"/>
</dbReference>
<dbReference type="PANTHER" id="PTHR10031">
    <property type="entry name" value="ATP SYNTHASE LIPID-BINDING PROTEIN, MITOCHONDRIAL"/>
    <property type="match status" value="1"/>
</dbReference>
<dbReference type="PANTHER" id="PTHR10031:SF0">
    <property type="entry name" value="ATPASE PROTEIN 9"/>
    <property type="match status" value="1"/>
</dbReference>
<dbReference type="Pfam" id="PF00137">
    <property type="entry name" value="ATP-synt_C"/>
    <property type="match status" value="1"/>
</dbReference>
<dbReference type="PRINTS" id="PR00124">
    <property type="entry name" value="ATPASEC"/>
</dbReference>
<dbReference type="SUPFAM" id="SSF81333">
    <property type="entry name" value="F1F0 ATP synthase subunit C"/>
    <property type="match status" value="1"/>
</dbReference>
<dbReference type="PROSITE" id="PS00605">
    <property type="entry name" value="ATPASE_C"/>
    <property type="match status" value="1"/>
</dbReference>
<name>ATPH_CARPA</name>
<sequence length="81" mass="7990">MNPLISAASVIAAGLAVGLASIGPGVGQGTAAGQAVEGIARQPEAEGKIRGTLLLSLAFMEALTIYGLVVALALLFANPFV</sequence>